<name>PDXS_STAAE</name>
<organism>
    <name type="scientific">Staphylococcus aureus (strain Newman)</name>
    <dbReference type="NCBI Taxonomy" id="426430"/>
    <lineage>
        <taxon>Bacteria</taxon>
        <taxon>Bacillati</taxon>
        <taxon>Bacillota</taxon>
        <taxon>Bacilli</taxon>
        <taxon>Bacillales</taxon>
        <taxon>Staphylococcaceae</taxon>
        <taxon>Staphylococcus</taxon>
    </lineage>
</organism>
<keyword id="KW-0456">Lyase</keyword>
<keyword id="KW-0663">Pyridoxal phosphate</keyword>
<keyword id="KW-0704">Schiff base</keyword>
<reference key="1">
    <citation type="journal article" date="2008" name="J. Bacteriol.">
        <title>Genome sequence of Staphylococcus aureus strain Newman and comparative analysis of staphylococcal genomes: polymorphism and evolution of two major pathogenicity islands.</title>
        <authorList>
            <person name="Baba T."/>
            <person name="Bae T."/>
            <person name="Schneewind O."/>
            <person name="Takeuchi F."/>
            <person name="Hiramatsu K."/>
        </authorList>
    </citation>
    <scope>NUCLEOTIDE SEQUENCE [LARGE SCALE GENOMIC DNA]</scope>
    <source>
        <strain>Newman</strain>
    </source>
</reference>
<gene>
    <name evidence="1" type="primary">pdxS</name>
    <name type="ordered locus">NWMN_0481</name>
</gene>
<proteinExistence type="inferred from homology"/>
<evidence type="ECO:0000255" key="1">
    <source>
        <dbReference type="HAMAP-Rule" id="MF_01824"/>
    </source>
</evidence>
<comment type="function">
    <text evidence="1">Catalyzes the formation of pyridoxal 5'-phosphate from ribose 5-phosphate (RBP), glyceraldehyde 3-phosphate (G3P) and ammonia. The ammonia is provided by the PdxT subunit. Can also use ribulose 5-phosphate and dihydroxyacetone phosphate as substrates, resulting from enzyme-catalyzed isomerization of RBP and G3P, respectively.</text>
</comment>
<comment type="catalytic activity">
    <reaction evidence="1">
        <text>aldehydo-D-ribose 5-phosphate + D-glyceraldehyde 3-phosphate + L-glutamine = pyridoxal 5'-phosphate + L-glutamate + phosphate + 3 H2O + H(+)</text>
        <dbReference type="Rhea" id="RHEA:31507"/>
        <dbReference type="ChEBI" id="CHEBI:15377"/>
        <dbReference type="ChEBI" id="CHEBI:15378"/>
        <dbReference type="ChEBI" id="CHEBI:29985"/>
        <dbReference type="ChEBI" id="CHEBI:43474"/>
        <dbReference type="ChEBI" id="CHEBI:58273"/>
        <dbReference type="ChEBI" id="CHEBI:58359"/>
        <dbReference type="ChEBI" id="CHEBI:59776"/>
        <dbReference type="ChEBI" id="CHEBI:597326"/>
        <dbReference type="EC" id="4.3.3.6"/>
    </reaction>
</comment>
<comment type="pathway">
    <text evidence="1">Cofactor biosynthesis; pyridoxal 5'-phosphate biosynthesis.</text>
</comment>
<comment type="subunit">
    <text evidence="1">In the presence of PdxT, forms a dodecamer of heterodimers.</text>
</comment>
<comment type="similarity">
    <text evidence="1">Belongs to the PdxS/SNZ family.</text>
</comment>
<sequence>MSKIIGSDRVKRGMAEMQKGGVIMDVVNAEQARIAEEAGAVAVMALERVPSDIRAAGGVARMANPKIVEEVMNAVSIPVMAKARIGHITEARVLEAMGVDYIDESEVLTPADEEYHLRKDQFTVPFVCGCRNLGEAARRIGEGAAMLRTKGEPGTGNIVEAVRHMRQVNSEVSRLTVMNDDEIMTFAKDIGAPYEILKQIKDNGRLPVVNFAAGGVATPQDAALMMELGADGVFVGSGIFKSEDPEKFAKAIVQATTHYQDYELIGRLASELGTAMKGLDINQLSLEERMQERGW</sequence>
<dbReference type="EC" id="4.3.3.6" evidence="1"/>
<dbReference type="EMBL" id="AP009351">
    <property type="protein sequence ID" value="BAF66753.1"/>
    <property type="molecule type" value="Genomic_DNA"/>
</dbReference>
<dbReference type="RefSeq" id="WP_000034728.1">
    <property type="nucleotide sequence ID" value="NZ_JBBIAE010000002.1"/>
</dbReference>
<dbReference type="SMR" id="A6QEH1"/>
<dbReference type="GeneID" id="66838811"/>
<dbReference type="KEGG" id="sae:NWMN_0481"/>
<dbReference type="HOGENOM" id="CLU_055352_1_0_9"/>
<dbReference type="UniPathway" id="UPA00245"/>
<dbReference type="Proteomes" id="UP000006386">
    <property type="component" value="Chromosome"/>
</dbReference>
<dbReference type="GO" id="GO:0036381">
    <property type="term" value="F:pyridoxal 5'-phosphate synthase (glutamine hydrolysing) activity"/>
    <property type="evidence" value="ECO:0007669"/>
    <property type="project" value="UniProtKB-UniRule"/>
</dbReference>
<dbReference type="GO" id="GO:0006520">
    <property type="term" value="P:amino acid metabolic process"/>
    <property type="evidence" value="ECO:0007669"/>
    <property type="project" value="TreeGrafter"/>
</dbReference>
<dbReference type="GO" id="GO:0042823">
    <property type="term" value="P:pyridoxal phosphate biosynthetic process"/>
    <property type="evidence" value="ECO:0007669"/>
    <property type="project" value="UniProtKB-UniRule"/>
</dbReference>
<dbReference type="GO" id="GO:0008615">
    <property type="term" value="P:pyridoxine biosynthetic process"/>
    <property type="evidence" value="ECO:0007669"/>
    <property type="project" value="TreeGrafter"/>
</dbReference>
<dbReference type="CDD" id="cd04727">
    <property type="entry name" value="pdxS"/>
    <property type="match status" value="1"/>
</dbReference>
<dbReference type="FunFam" id="3.20.20.70:FF:000001">
    <property type="entry name" value="Pyridoxine biosynthesis protein PDX1"/>
    <property type="match status" value="1"/>
</dbReference>
<dbReference type="Gene3D" id="3.20.20.70">
    <property type="entry name" value="Aldolase class I"/>
    <property type="match status" value="1"/>
</dbReference>
<dbReference type="HAMAP" id="MF_01824">
    <property type="entry name" value="PdxS"/>
    <property type="match status" value="1"/>
</dbReference>
<dbReference type="InterPro" id="IPR013785">
    <property type="entry name" value="Aldolase_TIM"/>
</dbReference>
<dbReference type="InterPro" id="IPR001852">
    <property type="entry name" value="PdxS/SNZ"/>
</dbReference>
<dbReference type="InterPro" id="IPR033755">
    <property type="entry name" value="PdxS/SNZ_N"/>
</dbReference>
<dbReference type="InterPro" id="IPR011060">
    <property type="entry name" value="RibuloseP-bd_barrel"/>
</dbReference>
<dbReference type="NCBIfam" id="NF003215">
    <property type="entry name" value="PRK04180.1"/>
    <property type="match status" value="1"/>
</dbReference>
<dbReference type="NCBIfam" id="TIGR00343">
    <property type="entry name" value="pyridoxal 5'-phosphate synthase lyase subunit PdxS"/>
    <property type="match status" value="1"/>
</dbReference>
<dbReference type="PANTHER" id="PTHR31829">
    <property type="entry name" value="PYRIDOXAL 5'-PHOSPHATE SYNTHASE SUBUNIT SNZ1-RELATED"/>
    <property type="match status" value="1"/>
</dbReference>
<dbReference type="PANTHER" id="PTHR31829:SF0">
    <property type="entry name" value="PYRIDOXAL 5'-PHOSPHATE SYNTHASE SUBUNIT SNZ1-RELATED"/>
    <property type="match status" value="1"/>
</dbReference>
<dbReference type="Pfam" id="PF01680">
    <property type="entry name" value="SOR_SNZ"/>
    <property type="match status" value="1"/>
</dbReference>
<dbReference type="PIRSF" id="PIRSF029271">
    <property type="entry name" value="Pdx1"/>
    <property type="match status" value="1"/>
</dbReference>
<dbReference type="SUPFAM" id="SSF51366">
    <property type="entry name" value="Ribulose-phoshate binding barrel"/>
    <property type="match status" value="1"/>
</dbReference>
<dbReference type="PROSITE" id="PS01235">
    <property type="entry name" value="PDXS_SNZ_1"/>
    <property type="match status" value="1"/>
</dbReference>
<dbReference type="PROSITE" id="PS51129">
    <property type="entry name" value="PDXS_SNZ_2"/>
    <property type="match status" value="1"/>
</dbReference>
<accession>A6QEH1</accession>
<protein>
    <recommendedName>
        <fullName evidence="1">Pyridoxal 5'-phosphate synthase subunit PdxS</fullName>
        <shortName evidence="1">PLP synthase subunit PdxS</shortName>
        <ecNumber evidence="1">4.3.3.6</ecNumber>
    </recommendedName>
    <alternativeName>
        <fullName evidence="1">Pdx1</fullName>
    </alternativeName>
</protein>
<feature type="chain" id="PRO_1000073687" description="Pyridoxal 5'-phosphate synthase subunit PdxS">
    <location>
        <begin position="1"/>
        <end position="295"/>
    </location>
</feature>
<feature type="active site" description="Schiff-base intermediate with D-ribose 5-phosphate" evidence="1">
    <location>
        <position position="82"/>
    </location>
</feature>
<feature type="binding site" evidence="1">
    <location>
        <position position="25"/>
    </location>
    <ligand>
        <name>D-ribose 5-phosphate</name>
        <dbReference type="ChEBI" id="CHEBI:78346"/>
    </ligand>
</feature>
<feature type="binding site" evidence="1">
    <location>
        <position position="154"/>
    </location>
    <ligand>
        <name>D-ribose 5-phosphate</name>
        <dbReference type="ChEBI" id="CHEBI:78346"/>
    </ligand>
</feature>
<feature type="binding site" evidence="1">
    <location>
        <position position="166"/>
    </location>
    <ligand>
        <name>D-glyceraldehyde 3-phosphate</name>
        <dbReference type="ChEBI" id="CHEBI:59776"/>
    </ligand>
</feature>
<feature type="binding site" evidence="1">
    <location>
        <position position="215"/>
    </location>
    <ligand>
        <name>D-ribose 5-phosphate</name>
        <dbReference type="ChEBI" id="CHEBI:78346"/>
    </ligand>
</feature>
<feature type="binding site" evidence="1">
    <location>
        <begin position="236"/>
        <end position="237"/>
    </location>
    <ligand>
        <name>D-ribose 5-phosphate</name>
        <dbReference type="ChEBI" id="CHEBI:78346"/>
    </ligand>
</feature>